<gene>
    <name evidence="1" type="primary">atpA</name>
    <name type="ordered locus">Daro_4112</name>
</gene>
<evidence type="ECO:0000255" key="1">
    <source>
        <dbReference type="HAMAP-Rule" id="MF_01346"/>
    </source>
</evidence>
<organism>
    <name type="scientific">Dechloromonas aromatica (strain RCB)</name>
    <dbReference type="NCBI Taxonomy" id="159087"/>
    <lineage>
        <taxon>Bacteria</taxon>
        <taxon>Pseudomonadati</taxon>
        <taxon>Pseudomonadota</taxon>
        <taxon>Betaproteobacteria</taxon>
        <taxon>Rhodocyclales</taxon>
        <taxon>Azonexaceae</taxon>
        <taxon>Dechloromonas</taxon>
    </lineage>
</organism>
<protein>
    <recommendedName>
        <fullName evidence="1">ATP synthase subunit alpha</fullName>
        <ecNumber evidence="1">7.1.2.2</ecNumber>
    </recommendedName>
    <alternativeName>
        <fullName evidence="1">ATP synthase F1 sector subunit alpha</fullName>
    </alternativeName>
    <alternativeName>
        <fullName evidence="1">F-ATPase subunit alpha</fullName>
    </alternativeName>
</protein>
<comment type="function">
    <text evidence="1">Produces ATP from ADP in the presence of a proton gradient across the membrane. The alpha chain is a regulatory subunit.</text>
</comment>
<comment type="catalytic activity">
    <reaction evidence="1">
        <text>ATP + H2O + 4 H(+)(in) = ADP + phosphate + 5 H(+)(out)</text>
        <dbReference type="Rhea" id="RHEA:57720"/>
        <dbReference type="ChEBI" id="CHEBI:15377"/>
        <dbReference type="ChEBI" id="CHEBI:15378"/>
        <dbReference type="ChEBI" id="CHEBI:30616"/>
        <dbReference type="ChEBI" id="CHEBI:43474"/>
        <dbReference type="ChEBI" id="CHEBI:456216"/>
        <dbReference type="EC" id="7.1.2.2"/>
    </reaction>
</comment>
<comment type="subunit">
    <text evidence="1">F-type ATPases have 2 components, CF(1) - the catalytic core - and CF(0) - the membrane proton channel. CF(1) has five subunits: alpha(3), beta(3), gamma(1), delta(1), epsilon(1). CF(0) has three main subunits: a(1), b(2) and c(9-12). The alpha and beta chains form an alternating ring which encloses part of the gamma chain. CF(1) is attached to CF(0) by a central stalk formed by the gamma and epsilon chains, while a peripheral stalk is formed by the delta and b chains.</text>
</comment>
<comment type="subcellular location">
    <subcellularLocation>
        <location evidence="1">Cell inner membrane</location>
        <topology evidence="1">Peripheral membrane protein</topology>
    </subcellularLocation>
</comment>
<comment type="similarity">
    <text evidence="1">Belongs to the ATPase alpha/beta chains family.</text>
</comment>
<sequence>MQLNPSEISELIKSKIQNLQGASEVRTQGTVVSVTDGICRVHGLQDVMQGEMLEFPGNTFGMALNLERDSVGAVVLGEYEHISEGDIVKTTGRILEVPVGPELLGRVVNSLGQPIDGKGPINAKLTDKIEKVAPGVIWRQSVSQPVQTGLKCVDSMVPVGRGQRELIIGDRQTGKTAVAVDAIINQKGKGLFCVYVAIGQKASTIANVVRKLEEHGAMEYTIVVAAPASESAALQYLAPYAGCTMGEYFRDTGEDALIIYDDLTKQAWGYRQVSLLLRRPPGREAYPGDVFYLHSRLLERAARVSAAWVEKLSNGAIKGKTGSLTALPVIETQAGDVSAFVPTNVISITDGQIFLETDLFNAGIRPAINAGISVSRVGGAAQTKLIKKLGGGVRLALAQYRELAAFAQFASDLDEATRKQLERGRLVTELMKQPQYSPMSISEMAVTLYAADKGYFDDVEVKRALECEKAMIGYLKTNCADLMKTMESTADLSADSEKQLAAGIAAFKSSWV</sequence>
<keyword id="KW-0066">ATP synthesis</keyword>
<keyword id="KW-0067">ATP-binding</keyword>
<keyword id="KW-0997">Cell inner membrane</keyword>
<keyword id="KW-1003">Cell membrane</keyword>
<keyword id="KW-0139">CF(1)</keyword>
<keyword id="KW-0375">Hydrogen ion transport</keyword>
<keyword id="KW-0406">Ion transport</keyword>
<keyword id="KW-0472">Membrane</keyword>
<keyword id="KW-0547">Nucleotide-binding</keyword>
<keyword id="KW-1278">Translocase</keyword>
<keyword id="KW-0813">Transport</keyword>
<reference key="1">
    <citation type="journal article" date="2009" name="BMC Genomics">
        <title>Metabolic analysis of the soil microbe Dechloromonas aromatica str. RCB: indications of a surprisingly complex life-style and cryptic anaerobic pathways for aromatic degradation.</title>
        <authorList>
            <person name="Salinero K.K."/>
            <person name="Keller K."/>
            <person name="Feil W.S."/>
            <person name="Feil H."/>
            <person name="Trong S."/>
            <person name="Di Bartolo G."/>
            <person name="Lapidus A."/>
        </authorList>
    </citation>
    <scope>NUCLEOTIDE SEQUENCE [LARGE SCALE GENOMIC DNA]</scope>
    <source>
        <strain>RCB</strain>
    </source>
</reference>
<name>ATPA_DECAR</name>
<feature type="chain" id="PRO_0000238238" description="ATP synthase subunit alpha">
    <location>
        <begin position="1"/>
        <end position="512"/>
    </location>
</feature>
<feature type="binding site" evidence="1">
    <location>
        <begin position="169"/>
        <end position="176"/>
    </location>
    <ligand>
        <name>ATP</name>
        <dbReference type="ChEBI" id="CHEBI:30616"/>
    </ligand>
</feature>
<feature type="site" description="Required for activity" evidence="1">
    <location>
        <position position="373"/>
    </location>
</feature>
<accession>Q477Z3</accession>
<dbReference type="EC" id="7.1.2.2" evidence="1"/>
<dbReference type="EMBL" id="CP000089">
    <property type="protein sequence ID" value="AAZ48838.1"/>
    <property type="molecule type" value="Genomic_DNA"/>
</dbReference>
<dbReference type="SMR" id="Q477Z3"/>
<dbReference type="STRING" id="159087.Daro_4112"/>
<dbReference type="KEGG" id="dar:Daro_4112"/>
<dbReference type="eggNOG" id="COG0056">
    <property type="taxonomic scope" value="Bacteria"/>
</dbReference>
<dbReference type="HOGENOM" id="CLU_010091_2_1_4"/>
<dbReference type="OrthoDB" id="9803053at2"/>
<dbReference type="GO" id="GO:0005886">
    <property type="term" value="C:plasma membrane"/>
    <property type="evidence" value="ECO:0007669"/>
    <property type="project" value="UniProtKB-SubCell"/>
</dbReference>
<dbReference type="GO" id="GO:0045259">
    <property type="term" value="C:proton-transporting ATP synthase complex"/>
    <property type="evidence" value="ECO:0007669"/>
    <property type="project" value="UniProtKB-KW"/>
</dbReference>
<dbReference type="GO" id="GO:0043531">
    <property type="term" value="F:ADP binding"/>
    <property type="evidence" value="ECO:0007669"/>
    <property type="project" value="TreeGrafter"/>
</dbReference>
<dbReference type="GO" id="GO:0005524">
    <property type="term" value="F:ATP binding"/>
    <property type="evidence" value="ECO:0007669"/>
    <property type="project" value="UniProtKB-UniRule"/>
</dbReference>
<dbReference type="GO" id="GO:0046933">
    <property type="term" value="F:proton-transporting ATP synthase activity, rotational mechanism"/>
    <property type="evidence" value="ECO:0007669"/>
    <property type="project" value="UniProtKB-UniRule"/>
</dbReference>
<dbReference type="CDD" id="cd18113">
    <property type="entry name" value="ATP-synt_F1_alpha_C"/>
    <property type="match status" value="1"/>
</dbReference>
<dbReference type="CDD" id="cd18116">
    <property type="entry name" value="ATP-synt_F1_alpha_N"/>
    <property type="match status" value="1"/>
</dbReference>
<dbReference type="CDD" id="cd01132">
    <property type="entry name" value="F1-ATPase_alpha_CD"/>
    <property type="match status" value="1"/>
</dbReference>
<dbReference type="FunFam" id="1.20.150.20:FF:000001">
    <property type="entry name" value="ATP synthase subunit alpha"/>
    <property type="match status" value="1"/>
</dbReference>
<dbReference type="FunFam" id="2.40.30.20:FF:000001">
    <property type="entry name" value="ATP synthase subunit alpha"/>
    <property type="match status" value="1"/>
</dbReference>
<dbReference type="FunFam" id="3.40.50.300:FF:000002">
    <property type="entry name" value="ATP synthase subunit alpha"/>
    <property type="match status" value="1"/>
</dbReference>
<dbReference type="Gene3D" id="2.40.30.20">
    <property type="match status" value="1"/>
</dbReference>
<dbReference type="Gene3D" id="1.20.150.20">
    <property type="entry name" value="ATP synthase alpha/beta chain, C-terminal domain"/>
    <property type="match status" value="1"/>
</dbReference>
<dbReference type="Gene3D" id="3.40.50.300">
    <property type="entry name" value="P-loop containing nucleotide triphosphate hydrolases"/>
    <property type="match status" value="1"/>
</dbReference>
<dbReference type="HAMAP" id="MF_01346">
    <property type="entry name" value="ATP_synth_alpha_bact"/>
    <property type="match status" value="1"/>
</dbReference>
<dbReference type="InterPro" id="IPR023366">
    <property type="entry name" value="ATP_synth_asu-like_sf"/>
</dbReference>
<dbReference type="InterPro" id="IPR000793">
    <property type="entry name" value="ATP_synth_asu_C"/>
</dbReference>
<dbReference type="InterPro" id="IPR038376">
    <property type="entry name" value="ATP_synth_asu_C_sf"/>
</dbReference>
<dbReference type="InterPro" id="IPR033732">
    <property type="entry name" value="ATP_synth_F1_a_nt-bd_dom"/>
</dbReference>
<dbReference type="InterPro" id="IPR005294">
    <property type="entry name" value="ATP_synth_F1_asu"/>
</dbReference>
<dbReference type="InterPro" id="IPR020003">
    <property type="entry name" value="ATPase_a/bsu_AS"/>
</dbReference>
<dbReference type="InterPro" id="IPR004100">
    <property type="entry name" value="ATPase_F1/V1/A1_a/bsu_N"/>
</dbReference>
<dbReference type="InterPro" id="IPR036121">
    <property type="entry name" value="ATPase_F1/V1/A1_a/bsu_N_sf"/>
</dbReference>
<dbReference type="InterPro" id="IPR000194">
    <property type="entry name" value="ATPase_F1/V1/A1_a/bsu_nucl-bd"/>
</dbReference>
<dbReference type="InterPro" id="IPR027417">
    <property type="entry name" value="P-loop_NTPase"/>
</dbReference>
<dbReference type="NCBIfam" id="TIGR00962">
    <property type="entry name" value="atpA"/>
    <property type="match status" value="1"/>
</dbReference>
<dbReference type="NCBIfam" id="NF009884">
    <property type="entry name" value="PRK13343.1"/>
    <property type="match status" value="1"/>
</dbReference>
<dbReference type="PANTHER" id="PTHR48082">
    <property type="entry name" value="ATP SYNTHASE SUBUNIT ALPHA, MITOCHONDRIAL"/>
    <property type="match status" value="1"/>
</dbReference>
<dbReference type="PANTHER" id="PTHR48082:SF2">
    <property type="entry name" value="ATP SYNTHASE SUBUNIT ALPHA, MITOCHONDRIAL"/>
    <property type="match status" value="1"/>
</dbReference>
<dbReference type="Pfam" id="PF00006">
    <property type="entry name" value="ATP-synt_ab"/>
    <property type="match status" value="1"/>
</dbReference>
<dbReference type="Pfam" id="PF00306">
    <property type="entry name" value="ATP-synt_ab_C"/>
    <property type="match status" value="1"/>
</dbReference>
<dbReference type="Pfam" id="PF02874">
    <property type="entry name" value="ATP-synt_ab_N"/>
    <property type="match status" value="1"/>
</dbReference>
<dbReference type="PIRSF" id="PIRSF039088">
    <property type="entry name" value="F_ATPase_subunit_alpha"/>
    <property type="match status" value="1"/>
</dbReference>
<dbReference type="SUPFAM" id="SSF47917">
    <property type="entry name" value="C-terminal domain of alpha and beta subunits of F1 ATP synthase"/>
    <property type="match status" value="1"/>
</dbReference>
<dbReference type="SUPFAM" id="SSF50615">
    <property type="entry name" value="N-terminal domain of alpha and beta subunits of F1 ATP synthase"/>
    <property type="match status" value="1"/>
</dbReference>
<dbReference type="SUPFAM" id="SSF52540">
    <property type="entry name" value="P-loop containing nucleoside triphosphate hydrolases"/>
    <property type="match status" value="1"/>
</dbReference>
<dbReference type="PROSITE" id="PS00152">
    <property type="entry name" value="ATPASE_ALPHA_BETA"/>
    <property type="match status" value="1"/>
</dbReference>
<proteinExistence type="inferred from homology"/>